<gene>
    <name evidence="1" type="primary">trpC</name>
    <name type="ordered locus">Pnap_3649</name>
</gene>
<sequence length="263" mass="28873">MSDILNKIIAVKREEITDAINRKPLPAMRKDAESRVLTRDFVGALRAKIAAGKPAVIAEIKKASPSKGVLRADFIPADIAQSYAEFGAACLSVLTDQQFFQGSIDYLKQARASCSLPVLRKDFIIDAYQVYESRVMGADCILLIAACLDDAQMKTLEALAMSLDMAVLVEVHDEAELERALKLRTPLIGINNRNLNTFEVSLDTTLRLMGKVPAERLLVTESGITTPEDVKRMRDARVNAFLVGEAFMRADEPGVALAELFGE</sequence>
<proteinExistence type="inferred from homology"/>
<dbReference type="EC" id="4.1.1.48" evidence="1"/>
<dbReference type="EMBL" id="CP000529">
    <property type="protein sequence ID" value="ABM38945.1"/>
    <property type="molecule type" value="Genomic_DNA"/>
</dbReference>
<dbReference type="RefSeq" id="WP_011803011.1">
    <property type="nucleotide sequence ID" value="NC_008781.1"/>
</dbReference>
<dbReference type="SMR" id="A1VTG7"/>
<dbReference type="STRING" id="365044.Pnap_3649"/>
<dbReference type="KEGG" id="pna:Pnap_3649"/>
<dbReference type="eggNOG" id="COG0134">
    <property type="taxonomic scope" value="Bacteria"/>
</dbReference>
<dbReference type="HOGENOM" id="CLU_034247_2_0_4"/>
<dbReference type="OrthoDB" id="9804217at2"/>
<dbReference type="UniPathway" id="UPA00035">
    <property type="reaction ID" value="UER00043"/>
</dbReference>
<dbReference type="Proteomes" id="UP000000644">
    <property type="component" value="Chromosome"/>
</dbReference>
<dbReference type="GO" id="GO:0004425">
    <property type="term" value="F:indole-3-glycerol-phosphate synthase activity"/>
    <property type="evidence" value="ECO:0007669"/>
    <property type="project" value="UniProtKB-UniRule"/>
</dbReference>
<dbReference type="GO" id="GO:0004640">
    <property type="term" value="F:phosphoribosylanthranilate isomerase activity"/>
    <property type="evidence" value="ECO:0007669"/>
    <property type="project" value="TreeGrafter"/>
</dbReference>
<dbReference type="GO" id="GO:0000162">
    <property type="term" value="P:L-tryptophan biosynthetic process"/>
    <property type="evidence" value="ECO:0007669"/>
    <property type="project" value="UniProtKB-UniRule"/>
</dbReference>
<dbReference type="CDD" id="cd00331">
    <property type="entry name" value="IGPS"/>
    <property type="match status" value="1"/>
</dbReference>
<dbReference type="FunFam" id="3.20.20.70:FF:000024">
    <property type="entry name" value="Indole-3-glycerol phosphate synthase"/>
    <property type="match status" value="1"/>
</dbReference>
<dbReference type="Gene3D" id="3.20.20.70">
    <property type="entry name" value="Aldolase class I"/>
    <property type="match status" value="1"/>
</dbReference>
<dbReference type="HAMAP" id="MF_00134_B">
    <property type="entry name" value="IGPS_B"/>
    <property type="match status" value="1"/>
</dbReference>
<dbReference type="InterPro" id="IPR013785">
    <property type="entry name" value="Aldolase_TIM"/>
</dbReference>
<dbReference type="InterPro" id="IPR045186">
    <property type="entry name" value="Indole-3-glycerol_P_synth"/>
</dbReference>
<dbReference type="InterPro" id="IPR013798">
    <property type="entry name" value="Indole-3-glycerol_P_synth_dom"/>
</dbReference>
<dbReference type="InterPro" id="IPR001468">
    <property type="entry name" value="Indole-3-GlycerolPSynthase_CS"/>
</dbReference>
<dbReference type="InterPro" id="IPR011060">
    <property type="entry name" value="RibuloseP-bd_barrel"/>
</dbReference>
<dbReference type="NCBIfam" id="NF001370">
    <property type="entry name" value="PRK00278.1-2"/>
    <property type="match status" value="1"/>
</dbReference>
<dbReference type="NCBIfam" id="NF001373">
    <property type="entry name" value="PRK00278.1-6"/>
    <property type="match status" value="1"/>
</dbReference>
<dbReference type="NCBIfam" id="NF001377">
    <property type="entry name" value="PRK00278.2-4"/>
    <property type="match status" value="1"/>
</dbReference>
<dbReference type="PANTHER" id="PTHR22854:SF2">
    <property type="entry name" value="INDOLE-3-GLYCEROL-PHOSPHATE SYNTHASE"/>
    <property type="match status" value="1"/>
</dbReference>
<dbReference type="PANTHER" id="PTHR22854">
    <property type="entry name" value="TRYPTOPHAN BIOSYNTHESIS PROTEIN"/>
    <property type="match status" value="1"/>
</dbReference>
<dbReference type="Pfam" id="PF00218">
    <property type="entry name" value="IGPS"/>
    <property type="match status" value="1"/>
</dbReference>
<dbReference type="SUPFAM" id="SSF51366">
    <property type="entry name" value="Ribulose-phoshate binding barrel"/>
    <property type="match status" value="1"/>
</dbReference>
<dbReference type="PROSITE" id="PS00614">
    <property type="entry name" value="IGPS"/>
    <property type="match status" value="1"/>
</dbReference>
<comment type="catalytic activity">
    <reaction evidence="1">
        <text>1-(2-carboxyphenylamino)-1-deoxy-D-ribulose 5-phosphate + H(+) = (1S,2R)-1-C-(indol-3-yl)glycerol 3-phosphate + CO2 + H2O</text>
        <dbReference type="Rhea" id="RHEA:23476"/>
        <dbReference type="ChEBI" id="CHEBI:15377"/>
        <dbReference type="ChEBI" id="CHEBI:15378"/>
        <dbReference type="ChEBI" id="CHEBI:16526"/>
        <dbReference type="ChEBI" id="CHEBI:58613"/>
        <dbReference type="ChEBI" id="CHEBI:58866"/>
        <dbReference type="EC" id="4.1.1.48"/>
    </reaction>
</comment>
<comment type="pathway">
    <text evidence="1">Amino-acid biosynthesis; L-tryptophan biosynthesis; L-tryptophan from chorismate: step 4/5.</text>
</comment>
<comment type="similarity">
    <text evidence="1">Belongs to the TrpC family.</text>
</comment>
<keyword id="KW-0028">Amino-acid biosynthesis</keyword>
<keyword id="KW-0057">Aromatic amino acid biosynthesis</keyword>
<keyword id="KW-0210">Decarboxylase</keyword>
<keyword id="KW-0456">Lyase</keyword>
<keyword id="KW-1185">Reference proteome</keyword>
<keyword id="KW-0822">Tryptophan biosynthesis</keyword>
<name>TRPC_POLNA</name>
<reference key="1">
    <citation type="journal article" date="2009" name="Environ. Microbiol.">
        <title>The genome of Polaromonas naphthalenivorans strain CJ2, isolated from coal tar-contaminated sediment, reveals physiological and metabolic versatility and evolution through extensive horizontal gene transfer.</title>
        <authorList>
            <person name="Yagi J.M."/>
            <person name="Sims D."/>
            <person name="Brettin T."/>
            <person name="Bruce D."/>
            <person name="Madsen E.L."/>
        </authorList>
    </citation>
    <scope>NUCLEOTIDE SEQUENCE [LARGE SCALE GENOMIC DNA]</scope>
    <source>
        <strain>CJ2</strain>
    </source>
</reference>
<feature type="chain" id="PRO_1000018517" description="Indole-3-glycerol phosphate synthase">
    <location>
        <begin position="1"/>
        <end position="263"/>
    </location>
</feature>
<protein>
    <recommendedName>
        <fullName evidence="1">Indole-3-glycerol phosphate synthase</fullName>
        <shortName evidence="1">IGPS</shortName>
        <ecNumber evidence="1">4.1.1.48</ecNumber>
    </recommendedName>
</protein>
<organism>
    <name type="scientific">Polaromonas naphthalenivorans (strain CJ2)</name>
    <dbReference type="NCBI Taxonomy" id="365044"/>
    <lineage>
        <taxon>Bacteria</taxon>
        <taxon>Pseudomonadati</taxon>
        <taxon>Pseudomonadota</taxon>
        <taxon>Betaproteobacteria</taxon>
        <taxon>Burkholderiales</taxon>
        <taxon>Comamonadaceae</taxon>
        <taxon>Polaromonas</taxon>
    </lineage>
</organism>
<evidence type="ECO:0000255" key="1">
    <source>
        <dbReference type="HAMAP-Rule" id="MF_00134"/>
    </source>
</evidence>
<accession>A1VTG7</accession>